<feature type="chain" id="PRO_1000066450" description="Transcriptional regulator GfcR">
    <location>
        <begin position="1"/>
        <end position="205"/>
    </location>
</feature>
<organism>
    <name type="scientific">Methanococcus maripaludis (strain C7 / ATCC BAA-1331)</name>
    <dbReference type="NCBI Taxonomy" id="426368"/>
    <lineage>
        <taxon>Archaea</taxon>
        <taxon>Methanobacteriati</taxon>
        <taxon>Methanobacteriota</taxon>
        <taxon>Methanomada group</taxon>
        <taxon>Methanococci</taxon>
        <taxon>Methanococcales</taxon>
        <taxon>Methanococcaceae</taxon>
        <taxon>Methanococcus</taxon>
    </lineage>
</organism>
<name>GFCR_METM7</name>
<protein>
    <recommendedName>
        <fullName evidence="1">Transcriptional regulator GfcR</fullName>
    </recommendedName>
</protein>
<reference key="1">
    <citation type="submission" date="2007-06" db="EMBL/GenBank/DDBJ databases">
        <title>Complete sequence of Methanococcus maripaludis C7.</title>
        <authorList>
            <consortium name="US DOE Joint Genome Institute"/>
            <person name="Copeland A."/>
            <person name="Lucas S."/>
            <person name="Lapidus A."/>
            <person name="Barry K."/>
            <person name="Glavina del Rio T."/>
            <person name="Dalin E."/>
            <person name="Tice H."/>
            <person name="Pitluck S."/>
            <person name="Clum A."/>
            <person name="Schmutz J."/>
            <person name="Larimer F."/>
            <person name="Land M."/>
            <person name="Hauser L."/>
            <person name="Kyrpides N."/>
            <person name="Anderson I."/>
            <person name="Sieprawska-Lupa M."/>
            <person name="Whitman W.B."/>
            <person name="Richardson P."/>
        </authorList>
    </citation>
    <scope>NUCLEOTIDE SEQUENCE [LARGE SCALE GENOMIC DNA]</scope>
    <source>
        <strain>C7 / ATCC BAA-1331</strain>
    </source>
</reference>
<keyword id="KW-0238">DNA-binding</keyword>
<keyword id="KW-0804">Transcription</keyword>
<keyword id="KW-0805">Transcription regulation</keyword>
<gene>
    <name evidence="1" type="primary">gfcR</name>
    <name type="ordered locus">MmarC7_1077</name>
</gene>
<comment type="domain">
    <text evidence="1">Contains an N-terminal DNA-binding winged helix-turn-helix domain and a C-terminal regulatory domain (or effector binding domain) resembling phosphoribosyltransferase (PRT) domain.</text>
</comment>
<comment type="similarity">
    <text evidence="1">Belongs to the purine/pyrimidine phosphoribosyltransferase family. GfcR subfamily.</text>
</comment>
<dbReference type="EMBL" id="CP000745">
    <property type="protein sequence ID" value="ABR66143.1"/>
    <property type="molecule type" value="Genomic_DNA"/>
</dbReference>
<dbReference type="SMR" id="A6VI67"/>
<dbReference type="STRING" id="426368.MmarC7_1077"/>
<dbReference type="KEGG" id="mmz:MmarC7_1077"/>
<dbReference type="eggNOG" id="arCOG00028">
    <property type="taxonomic scope" value="Archaea"/>
</dbReference>
<dbReference type="HOGENOM" id="CLU_111001_0_0_2"/>
<dbReference type="OrthoDB" id="68893at2157"/>
<dbReference type="GO" id="GO:0003677">
    <property type="term" value="F:DNA binding"/>
    <property type="evidence" value="ECO:0007669"/>
    <property type="project" value="UniProtKB-UniRule"/>
</dbReference>
<dbReference type="GO" id="GO:0004588">
    <property type="term" value="F:orotate phosphoribosyltransferase activity"/>
    <property type="evidence" value="ECO:0007669"/>
    <property type="project" value="TreeGrafter"/>
</dbReference>
<dbReference type="GO" id="GO:0019856">
    <property type="term" value="P:pyrimidine nucleobase biosynthetic process"/>
    <property type="evidence" value="ECO:0007669"/>
    <property type="project" value="TreeGrafter"/>
</dbReference>
<dbReference type="GO" id="GO:0010468">
    <property type="term" value="P:regulation of gene expression"/>
    <property type="evidence" value="ECO:0007669"/>
    <property type="project" value="UniProtKB-UniRule"/>
</dbReference>
<dbReference type="GO" id="GO:0006222">
    <property type="term" value="P:UMP biosynthetic process"/>
    <property type="evidence" value="ECO:0007669"/>
    <property type="project" value="TreeGrafter"/>
</dbReference>
<dbReference type="CDD" id="cd06223">
    <property type="entry name" value="PRTases_typeI"/>
    <property type="match status" value="1"/>
</dbReference>
<dbReference type="Gene3D" id="3.40.50.2020">
    <property type="match status" value="1"/>
</dbReference>
<dbReference type="HAMAP" id="MF_01214">
    <property type="entry name" value="GfcR"/>
    <property type="match status" value="1"/>
</dbReference>
<dbReference type="InterPro" id="IPR022854">
    <property type="entry name" value="GfcR-like"/>
</dbReference>
<dbReference type="InterPro" id="IPR000836">
    <property type="entry name" value="PRibTrfase_dom"/>
</dbReference>
<dbReference type="InterPro" id="IPR029057">
    <property type="entry name" value="PRTase-like"/>
</dbReference>
<dbReference type="NCBIfam" id="NF002620">
    <property type="entry name" value="PRK02277.1"/>
    <property type="match status" value="1"/>
</dbReference>
<dbReference type="PANTHER" id="PTHR19278">
    <property type="entry name" value="OROTATE PHOSPHORIBOSYLTRANSFERASE"/>
    <property type="match status" value="1"/>
</dbReference>
<dbReference type="PANTHER" id="PTHR19278:SF41">
    <property type="entry name" value="PYRE-LIKE PROTEIN"/>
    <property type="match status" value="1"/>
</dbReference>
<dbReference type="Pfam" id="PF00156">
    <property type="entry name" value="Pribosyltran"/>
    <property type="match status" value="1"/>
</dbReference>
<dbReference type="SUPFAM" id="SSF53271">
    <property type="entry name" value="PRTase-like"/>
    <property type="match status" value="1"/>
</dbReference>
<dbReference type="PROSITE" id="PS00103">
    <property type="entry name" value="PUR_PYR_PR_TRANSFER"/>
    <property type="match status" value="1"/>
</dbReference>
<accession>A6VI67</accession>
<evidence type="ECO:0000255" key="1">
    <source>
        <dbReference type="HAMAP-Rule" id="MF_01214"/>
    </source>
</evidence>
<sequence>MKKELILKALKLRDMGFPSGDIAEELNISVKTALYLTLNGEELLKAGETPKEDSEKLDIFLEWDNVRASSRRLRNISKIICDMLSDVEFDGVVGISSGGVPLATLISDELDKNFSIYVPKKHVHTEKEKTTGFIGQNMSSIVGKDVIIVDDVMTSGNSVKETIKYLKGIANPKKVFVVMDKSGIDEIDGVRIEHLFRTGVVDIKK</sequence>
<proteinExistence type="inferred from homology"/>